<protein>
    <recommendedName>
        <fullName evidence="2">N(4)-acetylcytidine amidohydrolase</fullName>
        <shortName evidence="2">ac4C amidohydrolase</shortName>
        <ecNumber evidence="2">3.5.1.135</ecNumber>
    </recommendedName>
</protein>
<evidence type="ECO:0000255" key="1"/>
<evidence type="ECO:0000255" key="2">
    <source>
        <dbReference type="HAMAP-Rule" id="MF_00684"/>
    </source>
</evidence>
<proteinExistence type="inferred from homology"/>
<reference key="1">
    <citation type="journal article" date="2009" name="PLoS ONE">
        <title>Salmonella paratyphi C: genetic divergence from Salmonella choleraesuis and pathogenic convergence with Salmonella typhi.</title>
        <authorList>
            <person name="Liu W.-Q."/>
            <person name="Feng Y."/>
            <person name="Wang Y."/>
            <person name="Zou Q.-H."/>
            <person name="Chen F."/>
            <person name="Guo J.-T."/>
            <person name="Peng Y.-H."/>
            <person name="Jin Y."/>
            <person name="Li Y.-G."/>
            <person name="Hu S.-N."/>
            <person name="Johnston R.N."/>
            <person name="Liu G.-R."/>
            <person name="Liu S.-L."/>
        </authorList>
    </citation>
    <scope>NUCLEOTIDE SEQUENCE [LARGE SCALE GENOMIC DNA]</scope>
    <source>
        <strain>RKS4594</strain>
    </source>
</reference>
<feature type="chain" id="PRO_1000147751" description="N(4)-acetylcytidine amidohydrolase">
    <location>
        <begin position="1"/>
        <end position="103"/>
    </location>
</feature>
<feature type="domain" description="ASCH" evidence="1">
    <location>
        <begin position="6"/>
        <end position="94"/>
    </location>
</feature>
<feature type="active site" description="Proton acceptor" evidence="2">
    <location>
        <position position="21"/>
    </location>
</feature>
<feature type="active site" description="Nucleophile" evidence="2">
    <location>
        <position position="24"/>
    </location>
</feature>
<feature type="active site" description="Proton donor" evidence="2">
    <location>
        <position position="74"/>
    </location>
</feature>
<dbReference type="EC" id="3.5.1.135" evidence="2"/>
<dbReference type="EMBL" id="CP000857">
    <property type="protein sequence ID" value="ACN47197.1"/>
    <property type="molecule type" value="Genomic_DNA"/>
</dbReference>
<dbReference type="RefSeq" id="WP_001182976.1">
    <property type="nucleotide sequence ID" value="NC_012125.1"/>
</dbReference>
<dbReference type="SMR" id="C0PY23"/>
<dbReference type="KEGG" id="sei:SPC_3110"/>
<dbReference type="HOGENOM" id="CLU_152586_0_0_6"/>
<dbReference type="Proteomes" id="UP000001599">
    <property type="component" value="Chromosome"/>
</dbReference>
<dbReference type="GO" id="GO:0005829">
    <property type="term" value="C:cytosol"/>
    <property type="evidence" value="ECO:0007669"/>
    <property type="project" value="TreeGrafter"/>
</dbReference>
<dbReference type="GO" id="GO:0016813">
    <property type="term" value="F:hydrolase activity, acting on carbon-nitrogen (but not peptide) bonds, in linear amidines"/>
    <property type="evidence" value="ECO:0007669"/>
    <property type="project" value="UniProtKB-UniRule"/>
</dbReference>
<dbReference type="GO" id="GO:0106251">
    <property type="term" value="F:N4-acetylcytidine amidohydrolase activity"/>
    <property type="evidence" value="ECO:0007669"/>
    <property type="project" value="RHEA"/>
</dbReference>
<dbReference type="CDD" id="cd06552">
    <property type="entry name" value="ASCH_yqfb_like"/>
    <property type="match status" value="1"/>
</dbReference>
<dbReference type="FunFam" id="2.30.130.30:FF:000001">
    <property type="entry name" value="UPF0267 protein YqfB"/>
    <property type="match status" value="1"/>
</dbReference>
<dbReference type="Gene3D" id="2.30.130.30">
    <property type="entry name" value="Hypothetical protein"/>
    <property type="match status" value="1"/>
</dbReference>
<dbReference type="HAMAP" id="MF_00684">
    <property type="entry name" value="ac4C_amidohydr"/>
    <property type="match status" value="1"/>
</dbReference>
<dbReference type="InterPro" id="IPR008314">
    <property type="entry name" value="AC4CH"/>
</dbReference>
<dbReference type="InterPro" id="IPR007374">
    <property type="entry name" value="ASCH_domain"/>
</dbReference>
<dbReference type="InterPro" id="IPR015947">
    <property type="entry name" value="PUA-like_sf"/>
</dbReference>
<dbReference type="NCBIfam" id="NF003443">
    <property type="entry name" value="PRK04980.1"/>
    <property type="match status" value="1"/>
</dbReference>
<dbReference type="PANTHER" id="PTHR38088">
    <property type="entry name" value="UCP029143 FAMILY PROTEIN"/>
    <property type="match status" value="1"/>
</dbReference>
<dbReference type="PANTHER" id="PTHR38088:SF2">
    <property type="entry name" value="UCP029143 FAMILY PROTEIN"/>
    <property type="match status" value="1"/>
</dbReference>
<dbReference type="Pfam" id="PF04266">
    <property type="entry name" value="ASCH"/>
    <property type="match status" value="1"/>
</dbReference>
<dbReference type="PIRSF" id="PIRSF029143">
    <property type="entry name" value="UCP029143"/>
    <property type="match status" value="1"/>
</dbReference>
<dbReference type="SMART" id="SM01022">
    <property type="entry name" value="ASCH"/>
    <property type="match status" value="1"/>
</dbReference>
<dbReference type="SUPFAM" id="SSF88697">
    <property type="entry name" value="PUA domain-like"/>
    <property type="match status" value="1"/>
</dbReference>
<gene>
    <name type="primary">yqfB</name>
    <name type="ordered locus">SPC_3110</name>
</gene>
<sequence>MQPNDITFFQRFQNDILAGRKTITIRDASESHFKAGDVLRVGRFEDDGYFCTIEVTGTSTVTLDTLNEKHAQQENMSLDELKRVIAEIYPNQTQFYVIDFKCL</sequence>
<comment type="function">
    <text evidence="2">Catalyzes the hydrolysis of N(4)-acetylcytidine (ac4C).</text>
</comment>
<comment type="catalytic activity">
    <reaction evidence="2">
        <text>N(4)-acetylcytidine + H2O = cytidine + acetate + H(+)</text>
        <dbReference type="Rhea" id="RHEA:62932"/>
        <dbReference type="ChEBI" id="CHEBI:15377"/>
        <dbReference type="ChEBI" id="CHEBI:15378"/>
        <dbReference type="ChEBI" id="CHEBI:17562"/>
        <dbReference type="ChEBI" id="CHEBI:30089"/>
        <dbReference type="ChEBI" id="CHEBI:70989"/>
        <dbReference type="EC" id="3.5.1.135"/>
    </reaction>
</comment>
<comment type="catalytic activity">
    <reaction evidence="2">
        <text>N(4)-acetyl-2'-deoxycytidine + H2O = 2'-deoxycytidine + acetate + H(+)</text>
        <dbReference type="Rhea" id="RHEA:62936"/>
        <dbReference type="ChEBI" id="CHEBI:15377"/>
        <dbReference type="ChEBI" id="CHEBI:15378"/>
        <dbReference type="ChEBI" id="CHEBI:15698"/>
        <dbReference type="ChEBI" id="CHEBI:30089"/>
        <dbReference type="ChEBI" id="CHEBI:146133"/>
        <dbReference type="EC" id="3.5.1.135"/>
    </reaction>
</comment>
<comment type="catalytic activity">
    <reaction evidence="2">
        <text>N(4)-acetylcytosine + H2O = cytosine + acetate + H(+)</text>
        <dbReference type="Rhea" id="RHEA:62940"/>
        <dbReference type="ChEBI" id="CHEBI:15377"/>
        <dbReference type="ChEBI" id="CHEBI:15378"/>
        <dbReference type="ChEBI" id="CHEBI:16040"/>
        <dbReference type="ChEBI" id="CHEBI:30089"/>
        <dbReference type="ChEBI" id="CHEBI:146134"/>
        <dbReference type="EC" id="3.5.1.135"/>
    </reaction>
</comment>
<comment type="similarity">
    <text evidence="2">Belongs to the N(4)-acetylcytidine amidohydrolase family.</text>
</comment>
<organism>
    <name type="scientific">Salmonella paratyphi C (strain RKS4594)</name>
    <dbReference type="NCBI Taxonomy" id="476213"/>
    <lineage>
        <taxon>Bacteria</taxon>
        <taxon>Pseudomonadati</taxon>
        <taxon>Pseudomonadota</taxon>
        <taxon>Gammaproteobacteria</taxon>
        <taxon>Enterobacterales</taxon>
        <taxon>Enterobacteriaceae</taxon>
        <taxon>Salmonella</taxon>
    </lineage>
</organism>
<name>AC4CH_SALPC</name>
<keyword id="KW-0378">Hydrolase</keyword>
<accession>C0PY23</accession>